<comment type="function">
    <text>Probable ligand for integrin in the brain. This is a non-catalytic metalloprotease-like protein.</text>
</comment>
<comment type="subcellular location">
    <subcellularLocation>
        <location evidence="2">Presynaptic cell membrane</location>
        <topology>Single-pass type I membrane protein</topology>
    </subcellularLocation>
    <subcellularLocation>
        <location evidence="2">Perikaryon</location>
    </subcellularLocation>
    <subcellularLocation>
        <location evidence="2">Cell projection</location>
        <location evidence="2">Axon</location>
    </subcellularLocation>
</comment>
<comment type="tissue specificity">
    <text>Detected in testis and barely expressed in heart and muscle. Not detectable in liver.</text>
</comment>
<comment type="developmental stage">
    <text>Could not be detected in embryos until neurulation. In developing embryos, the expression is restricted to neural crest derivatives.</text>
</comment>
<comment type="domain">
    <text>A conserved motif [AVN[ED]CD] within the disintegrin-like domain could be involved in the binding to the integrin receptor.</text>
</comment>
<comment type="PTM">
    <text evidence="1">The precursor is cleaved by a furin endopeptidase.</text>
</comment>
<proteinExistence type="evidence at transcript level"/>
<gene>
    <name type="primary">adam11</name>
    <name type="synonym">mdc11a</name>
</gene>
<name>ADA11_XENLA</name>
<reference key="1">
    <citation type="journal article" date="1998" name="Dev. Biol.">
        <title>Neural crest-specific and general expression of distinct metalloprotease-disintegrins in early Xenopus laevis development.</title>
        <authorList>
            <person name="Cai H."/>
            <person name="Kraetzschmar J."/>
            <person name="Alfandari D."/>
            <person name="Hunnicutt G."/>
            <person name="Blobel C.P."/>
        </authorList>
    </citation>
    <scope>NUCLEOTIDE SEQUENCE [MRNA]</scope>
    <source>
        <tissue>Testis</tissue>
    </source>
</reference>
<dbReference type="EMBL" id="AF032384">
    <property type="protein sequence ID" value="AAC61848.1"/>
    <property type="molecule type" value="mRNA"/>
</dbReference>
<dbReference type="SMR" id="Q9PSZ3"/>
<dbReference type="MEROPS" id="M12.976"/>
<dbReference type="GlyCosmos" id="Q9PSZ3">
    <property type="glycosylation" value="3 sites, No reported glycans"/>
</dbReference>
<dbReference type="AGR" id="Xenbase:XB-GENE-966542"/>
<dbReference type="Xenbase" id="XB-GENE-966542">
    <property type="gene designation" value="adam11.L"/>
</dbReference>
<dbReference type="Proteomes" id="UP000186698">
    <property type="component" value="Unplaced"/>
</dbReference>
<dbReference type="GO" id="GO:0030424">
    <property type="term" value="C:axon"/>
    <property type="evidence" value="ECO:0007669"/>
    <property type="project" value="UniProtKB-SubCell"/>
</dbReference>
<dbReference type="GO" id="GO:0043204">
    <property type="term" value="C:perikaryon"/>
    <property type="evidence" value="ECO:0007669"/>
    <property type="project" value="UniProtKB-SubCell"/>
</dbReference>
<dbReference type="GO" id="GO:0042734">
    <property type="term" value="C:presynaptic membrane"/>
    <property type="evidence" value="ECO:0007669"/>
    <property type="project" value="UniProtKB-SubCell"/>
</dbReference>
<dbReference type="GO" id="GO:0004222">
    <property type="term" value="F:metalloendopeptidase activity"/>
    <property type="evidence" value="ECO:0000318"/>
    <property type="project" value="GO_Central"/>
</dbReference>
<dbReference type="GO" id="GO:0001755">
    <property type="term" value="P:neural crest cell migration"/>
    <property type="evidence" value="ECO:0000315"/>
    <property type="project" value="Xenbase"/>
</dbReference>
<dbReference type="GO" id="GO:0001843">
    <property type="term" value="P:neural tube closure"/>
    <property type="evidence" value="ECO:0000315"/>
    <property type="project" value="Xenbase"/>
</dbReference>
<dbReference type="GO" id="GO:0006508">
    <property type="term" value="P:proteolysis"/>
    <property type="evidence" value="ECO:0000318"/>
    <property type="project" value="GO_Central"/>
</dbReference>
<dbReference type="FunFam" id="2.10.25.10:FF:000147">
    <property type="entry name" value="Disintegrin and metalloproteinase domain-containing protein 11"/>
    <property type="match status" value="1"/>
</dbReference>
<dbReference type="FunFam" id="4.10.70.10:FF:000001">
    <property type="entry name" value="Disintegrin and metalloproteinase domain-containing protein 22"/>
    <property type="match status" value="1"/>
</dbReference>
<dbReference type="Gene3D" id="3.40.390.10">
    <property type="entry name" value="Collagenase (Catalytic Domain)"/>
    <property type="match status" value="1"/>
</dbReference>
<dbReference type="Gene3D" id="4.10.70.10">
    <property type="entry name" value="Disintegrin domain"/>
    <property type="match status" value="1"/>
</dbReference>
<dbReference type="Gene3D" id="2.10.25.10">
    <property type="entry name" value="Laminin"/>
    <property type="match status" value="1"/>
</dbReference>
<dbReference type="InterPro" id="IPR006586">
    <property type="entry name" value="ADAM_Cys-rich"/>
</dbReference>
<dbReference type="InterPro" id="IPR001762">
    <property type="entry name" value="Disintegrin_dom"/>
</dbReference>
<dbReference type="InterPro" id="IPR036436">
    <property type="entry name" value="Disintegrin_dom_sf"/>
</dbReference>
<dbReference type="InterPro" id="IPR000742">
    <property type="entry name" value="EGF-like_dom"/>
</dbReference>
<dbReference type="InterPro" id="IPR013111">
    <property type="entry name" value="EGF_extracell"/>
</dbReference>
<dbReference type="InterPro" id="IPR024079">
    <property type="entry name" value="MetalloPept_cat_dom_sf"/>
</dbReference>
<dbReference type="InterPro" id="IPR001590">
    <property type="entry name" value="Peptidase_M12B"/>
</dbReference>
<dbReference type="PANTHER" id="PTHR11905">
    <property type="entry name" value="ADAM A DISINTEGRIN AND METALLOPROTEASE DOMAIN"/>
    <property type="match status" value="1"/>
</dbReference>
<dbReference type="PANTHER" id="PTHR11905:SF114">
    <property type="entry name" value="DISINTEGRIN AND METALLOPROTEINASE DOMAIN-CONTAINING PROTEIN 11"/>
    <property type="match status" value="1"/>
</dbReference>
<dbReference type="Pfam" id="PF08516">
    <property type="entry name" value="ADAM_CR"/>
    <property type="match status" value="1"/>
</dbReference>
<dbReference type="Pfam" id="PF00200">
    <property type="entry name" value="Disintegrin"/>
    <property type="match status" value="1"/>
</dbReference>
<dbReference type="Pfam" id="PF07974">
    <property type="entry name" value="EGF_2"/>
    <property type="match status" value="1"/>
</dbReference>
<dbReference type="Pfam" id="PF01421">
    <property type="entry name" value="Reprolysin"/>
    <property type="match status" value="1"/>
</dbReference>
<dbReference type="PRINTS" id="PR00289">
    <property type="entry name" value="DISINTEGRIN"/>
</dbReference>
<dbReference type="SMART" id="SM00608">
    <property type="entry name" value="ACR"/>
    <property type="match status" value="1"/>
</dbReference>
<dbReference type="SMART" id="SM00050">
    <property type="entry name" value="DISIN"/>
    <property type="match status" value="1"/>
</dbReference>
<dbReference type="SUPFAM" id="SSF57552">
    <property type="entry name" value="Blood coagulation inhibitor (disintegrin)"/>
    <property type="match status" value="1"/>
</dbReference>
<dbReference type="SUPFAM" id="SSF55486">
    <property type="entry name" value="Metalloproteases ('zincins'), catalytic domain"/>
    <property type="match status" value="1"/>
</dbReference>
<dbReference type="PROSITE" id="PS50215">
    <property type="entry name" value="ADAM_MEPRO"/>
    <property type="match status" value="1"/>
</dbReference>
<dbReference type="PROSITE" id="PS50214">
    <property type="entry name" value="DISINTEGRIN_2"/>
    <property type="match status" value="1"/>
</dbReference>
<dbReference type="PROSITE" id="PS00022">
    <property type="entry name" value="EGF_1"/>
    <property type="match status" value="1"/>
</dbReference>
<dbReference type="PROSITE" id="PS50026">
    <property type="entry name" value="EGF_3"/>
    <property type="match status" value="1"/>
</dbReference>
<protein>
    <recommendedName>
        <fullName>Disintegrin and metalloproteinase domain-containing protein 11</fullName>
        <shortName>ADAM 11</shortName>
    </recommendedName>
    <alternativeName>
        <fullName>MDC11.1</fullName>
    </alternativeName>
    <alternativeName>
        <fullName>Metalloprotease-disintegrin MDC11a</fullName>
    </alternativeName>
    <alternativeName>
        <fullName>Metalloproteinase-like, disintegrin-like, and cysteine-rich protein</fullName>
        <shortName>MDC</shortName>
    </alternativeName>
</protein>
<keyword id="KW-1003">Cell membrane</keyword>
<keyword id="KW-0966">Cell projection</keyword>
<keyword id="KW-1015">Disulfide bond</keyword>
<keyword id="KW-0245">EGF-like domain</keyword>
<keyword id="KW-0325">Glycoprotein</keyword>
<keyword id="KW-0472">Membrane</keyword>
<keyword id="KW-1185">Reference proteome</keyword>
<keyword id="KW-0770">Synapse</keyword>
<keyword id="KW-0812">Transmembrane</keyword>
<keyword id="KW-1133">Transmembrane helix</keyword>
<sequence length="452" mass="48577">RRHHSPLLVSLIGGQTFKSSHSGAAYFGGICSPTHGGGVNEYGNIGAMAITLAQTLGQNLGMMWNKPRTTTGDCKCPDLWRGCIMEDTGFYLPQKFSRCSVDEYSKFLQDGGGSCLFNKPLKLLDPPSCGNGFIEIGEECDCGSPAECNKSRAGNCCKKCTLSHDAMCSDGLCCRGCKYEPRGTVCRESLNECDVPEACPGDSSACPANLHKQDGYFCDNEQGRCFGGRCKTRDRQCHALWGRGASDRFCYEKLNIEGTEKGNCGRDRQNWIQCSKQDVLCGYLLCSNISGIPQIGELNGDITSMSFYHQNRYLDCRGGQVTLPDGSCLGYVEDGTPCGPNMICLDRRCLPASAFNFSTCPGSWNGVICSDHGVCSNEGKCICHPEWTGKDCSVYDPLPVPKPTGVVEKYKGPSGTNIIIGSIAGAVLIAAIVLGGTGWGFKNIRRGRSGGG</sequence>
<organism>
    <name type="scientific">Xenopus laevis</name>
    <name type="common">African clawed frog</name>
    <dbReference type="NCBI Taxonomy" id="8355"/>
    <lineage>
        <taxon>Eukaryota</taxon>
        <taxon>Metazoa</taxon>
        <taxon>Chordata</taxon>
        <taxon>Craniata</taxon>
        <taxon>Vertebrata</taxon>
        <taxon>Euteleostomi</taxon>
        <taxon>Amphibia</taxon>
        <taxon>Batrachia</taxon>
        <taxon>Anura</taxon>
        <taxon>Pipoidea</taxon>
        <taxon>Pipidae</taxon>
        <taxon>Xenopodinae</taxon>
        <taxon>Xenopus</taxon>
        <taxon>Xenopus</taxon>
    </lineage>
</organism>
<feature type="chain" id="PRO_0000078206" description="Disintegrin and metalloproteinase domain-containing protein 11">
    <location>
        <begin position="1" status="less than"/>
        <end position="452"/>
    </location>
</feature>
<feature type="topological domain" description="Extracellular" evidence="3">
    <location>
        <begin position="1" status="less than"/>
        <end position="417"/>
    </location>
</feature>
<feature type="transmembrane region" description="Helical" evidence="3">
    <location>
        <begin position="418"/>
        <end position="438"/>
    </location>
</feature>
<feature type="topological domain" description="Cytoplasmic" evidence="3">
    <location>
        <begin position="439"/>
        <end position="452"/>
    </location>
</feature>
<feature type="domain" description="Peptidase M12B" evidence="6">
    <location>
        <begin position="1" status="less than"/>
        <end position="120"/>
    </location>
</feature>
<feature type="domain" description="Disintegrin" evidence="4">
    <location>
        <begin position="126"/>
        <end position="214"/>
    </location>
</feature>
<feature type="domain" description="EGF-like" evidence="5">
    <location>
        <begin position="360"/>
        <end position="416"/>
    </location>
</feature>
<feature type="glycosylation site" description="N-linked (GlcNAc...) asparagine" evidence="3">
    <location>
        <position position="149"/>
    </location>
</feature>
<feature type="glycosylation site" description="N-linked (GlcNAc...) asparagine" evidence="3">
    <location>
        <position position="288"/>
    </location>
</feature>
<feature type="glycosylation site" description="N-linked (GlcNAc...) asparagine" evidence="3">
    <location>
        <position position="356"/>
    </location>
</feature>
<feature type="disulfide bond" evidence="1">
    <location>
        <begin position="31"/>
        <end position="115"/>
    </location>
</feature>
<feature type="disulfide bond" evidence="1">
    <location>
        <begin position="74"/>
        <end position="99"/>
    </location>
</feature>
<feature type="disulfide bond" evidence="1">
    <location>
        <begin position="76"/>
        <end position="83"/>
    </location>
</feature>
<feature type="disulfide bond" evidence="1">
    <location>
        <begin position="186"/>
        <end position="206"/>
    </location>
</feature>
<feature type="disulfide bond" evidence="1">
    <location>
        <begin position="360"/>
        <end position="375"/>
    </location>
</feature>
<feature type="disulfide bond" evidence="1">
    <location>
        <begin position="369"/>
        <end position="381"/>
    </location>
</feature>
<feature type="disulfide bond" evidence="1">
    <location>
        <begin position="383"/>
        <end position="392"/>
    </location>
</feature>
<feature type="non-terminal residue">
    <location>
        <position position="1"/>
    </location>
</feature>
<accession>Q9PSZ3</accession>
<evidence type="ECO:0000250" key="1"/>
<evidence type="ECO:0000250" key="2">
    <source>
        <dbReference type="UniProtKB" id="Q9R1V4"/>
    </source>
</evidence>
<evidence type="ECO:0000255" key="3"/>
<evidence type="ECO:0000255" key="4">
    <source>
        <dbReference type="PROSITE-ProRule" id="PRU00068"/>
    </source>
</evidence>
<evidence type="ECO:0000255" key="5">
    <source>
        <dbReference type="PROSITE-ProRule" id="PRU00076"/>
    </source>
</evidence>
<evidence type="ECO:0000255" key="6">
    <source>
        <dbReference type="PROSITE-ProRule" id="PRU00276"/>
    </source>
</evidence>